<proteinExistence type="inferred from homology"/>
<sequence length="224" mass="24907">MSIRDWPEAERPREKLLEQGAATLSDAELLAIFLRTGVTGCSAVELARRLLGEFGSLRALLESDLAAFCGHLGLGVAKYAQLQAVLEMGRRHLAERLRRDSVLESPQAVRDYLKARLRHEQHEVFACLFLDTRHRVLAFEVLFQGSIDGASVYPRQVVKRALAHNAAALILTHNHPSGDARPSLADRQLTARLKEALALIDVRVLDHFIIGDGEPLSLAEYGWM</sequence>
<name>Y6095_PSEP7</name>
<gene>
    <name type="ordered locus">PSPA7_6095</name>
</gene>
<organism>
    <name type="scientific">Pseudomonas paraeruginosa (strain DSM 24068 / PA7)</name>
    <name type="common">Pseudomonas aeruginosa (strain PA7)</name>
    <dbReference type="NCBI Taxonomy" id="381754"/>
    <lineage>
        <taxon>Bacteria</taxon>
        <taxon>Pseudomonadati</taxon>
        <taxon>Pseudomonadota</taxon>
        <taxon>Gammaproteobacteria</taxon>
        <taxon>Pseudomonadales</taxon>
        <taxon>Pseudomonadaceae</taxon>
        <taxon>Pseudomonas</taxon>
        <taxon>Pseudomonas paraeruginosa</taxon>
    </lineage>
</organism>
<evidence type="ECO:0000255" key="1">
    <source>
        <dbReference type="PROSITE-ProRule" id="PRU01182"/>
    </source>
</evidence>
<evidence type="ECO:0000305" key="2"/>
<dbReference type="EMBL" id="CP000744">
    <property type="protein sequence ID" value="ABR81769.1"/>
    <property type="molecule type" value="Genomic_DNA"/>
</dbReference>
<dbReference type="RefSeq" id="WP_012077933.1">
    <property type="nucleotide sequence ID" value="NC_009656.1"/>
</dbReference>
<dbReference type="SMR" id="A6VEC6"/>
<dbReference type="KEGG" id="pap:PSPA7_6095"/>
<dbReference type="HOGENOM" id="CLU_073529_0_1_6"/>
<dbReference type="Proteomes" id="UP000001582">
    <property type="component" value="Chromosome"/>
</dbReference>
<dbReference type="GO" id="GO:0046872">
    <property type="term" value="F:metal ion binding"/>
    <property type="evidence" value="ECO:0007669"/>
    <property type="project" value="UniProtKB-KW"/>
</dbReference>
<dbReference type="GO" id="GO:0008237">
    <property type="term" value="F:metallopeptidase activity"/>
    <property type="evidence" value="ECO:0007669"/>
    <property type="project" value="UniProtKB-KW"/>
</dbReference>
<dbReference type="GO" id="GO:0006508">
    <property type="term" value="P:proteolysis"/>
    <property type="evidence" value="ECO:0007669"/>
    <property type="project" value="UniProtKB-KW"/>
</dbReference>
<dbReference type="CDD" id="cd08071">
    <property type="entry name" value="MPN_DUF2466"/>
    <property type="match status" value="1"/>
</dbReference>
<dbReference type="FunFam" id="3.40.140.10:FF:000032">
    <property type="entry name" value="DNA repair protein RadC"/>
    <property type="match status" value="1"/>
</dbReference>
<dbReference type="Gene3D" id="3.40.140.10">
    <property type="entry name" value="Cytidine Deaminase, domain 2"/>
    <property type="match status" value="1"/>
</dbReference>
<dbReference type="InterPro" id="IPR037518">
    <property type="entry name" value="MPN"/>
</dbReference>
<dbReference type="InterPro" id="IPR025657">
    <property type="entry name" value="RadC_JAB"/>
</dbReference>
<dbReference type="InterPro" id="IPR010994">
    <property type="entry name" value="RuvA_2-like"/>
</dbReference>
<dbReference type="InterPro" id="IPR001405">
    <property type="entry name" value="UPF0758"/>
</dbReference>
<dbReference type="InterPro" id="IPR020891">
    <property type="entry name" value="UPF0758_CS"/>
</dbReference>
<dbReference type="InterPro" id="IPR046778">
    <property type="entry name" value="UPF0758_N"/>
</dbReference>
<dbReference type="NCBIfam" id="NF000642">
    <property type="entry name" value="PRK00024.1"/>
    <property type="match status" value="1"/>
</dbReference>
<dbReference type="NCBIfam" id="TIGR00608">
    <property type="entry name" value="radc"/>
    <property type="match status" value="1"/>
</dbReference>
<dbReference type="PANTHER" id="PTHR30471">
    <property type="entry name" value="DNA REPAIR PROTEIN RADC"/>
    <property type="match status" value="1"/>
</dbReference>
<dbReference type="PANTHER" id="PTHR30471:SF3">
    <property type="entry name" value="UPF0758 PROTEIN YEES-RELATED"/>
    <property type="match status" value="1"/>
</dbReference>
<dbReference type="Pfam" id="PF04002">
    <property type="entry name" value="RadC"/>
    <property type="match status" value="1"/>
</dbReference>
<dbReference type="Pfam" id="PF20582">
    <property type="entry name" value="UPF0758_N"/>
    <property type="match status" value="1"/>
</dbReference>
<dbReference type="SUPFAM" id="SSF102712">
    <property type="entry name" value="JAB1/MPN domain"/>
    <property type="match status" value="1"/>
</dbReference>
<dbReference type="SUPFAM" id="SSF47781">
    <property type="entry name" value="RuvA domain 2-like"/>
    <property type="match status" value="1"/>
</dbReference>
<dbReference type="PROSITE" id="PS50249">
    <property type="entry name" value="MPN"/>
    <property type="match status" value="1"/>
</dbReference>
<dbReference type="PROSITE" id="PS01302">
    <property type="entry name" value="UPF0758"/>
    <property type="match status" value="1"/>
</dbReference>
<comment type="similarity">
    <text evidence="2">Belongs to the UPF0758 family.</text>
</comment>
<keyword id="KW-0378">Hydrolase</keyword>
<keyword id="KW-0479">Metal-binding</keyword>
<keyword id="KW-0482">Metalloprotease</keyword>
<keyword id="KW-0645">Protease</keyword>
<keyword id="KW-0862">Zinc</keyword>
<protein>
    <recommendedName>
        <fullName>UPF0758 protein PSPA7_6095</fullName>
    </recommendedName>
</protein>
<accession>A6VEC6</accession>
<feature type="chain" id="PRO_1000001676" description="UPF0758 protein PSPA7_6095">
    <location>
        <begin position="1"/>
        <end position="224"/>
    </location>
</feature>
<feature type="domain" description="MPN" evidence="1">
    <location>
        <begin position="102"/>
        <end position="224"/>
    </location>
</feature>
<feature type="short sequence motif" description="JAMM motif" evidence="1">
    <location>
        <begin position="173"/>
        <end position="186"/>
    </location>
</feature>
<feature type="binding site" evidence="1">
    <location>
        <position position="173"/>
    </location>
    <ligand>
        <name>Zn(2+)</name>
        <dbReference type="ChEBI" id="CHEBI:29105"/>
        <note>catalytic</note>
    </ligand>
</feature>
<feature type="binding site" evidence="1">
    <location>
        <position position="175"/>
    </location>
    <ligand>
        <name>Zn(2+)</name>
        <dbReference type="ChEBI" id="CHEBI:29105"/>
        <note>catalytic</note>
    </ligand>
</feature>
<feature type="binding site" evidence="1">
    <location>
        <position position="186"/>
    </location>
    <ligand>
        <name>Zn(2+)</name>
        <dbReference type="ChEBI" id="CHEBI:29105"/>
        <note>catalytic</note>
    </ligand>
</feature>
<reference key="1">
    <citation type="submission" date="2007-06" db="EMBL/GenBank/DDBJ databases">
        <authorList>
            <person name="Dodson R.J."/>
            <person name="Harkins D."/>
            <person name="Paulsen I.T."/>
        </authorList>
    </citation>
    <scope>NUCLEOTIDE SEQUENCE [LARGE SCALE GENOMIC DNA]</scope>
    <source>
        <strain>DSM 24068 / PA7</strain>
    </source>
</reference>